<organismHost>
    <name type="scientific">Aves</name>
    <dbReference type="NCBI Taxonomy" id="8782"/>
</organismHost>
<organismHost>
    <name type="scientific">Cetacea</name>
    <name type="common">whales</name>
    <dbReference type="NCBI Taxonomy" id="9721"/>
</organismHost>
<organismHost>
    <name type="scientific">Homo sapiens</name>
    <name type="common">Human</name>
    <dbReference type="NCBI Taxonomy" id="9606"/>
</organismHost>
<organismHost>
    <name type="scientific">Phocidae</name>
    <name type="common">true seals</name>
    <dbReference type="NCBI Taxonomy" id="9709"/>
</organismHost>
<organismHost>
    <name type="scientific">Sus scrofa</name>
    <name type="common">Pig</name>
    <dbReference type="NCBI Taxonomy" id="9823"/>
</organismHost>
<gene>
    <name evidence="2" type="primary">PA</name>
</gene>
<protein>
    <recommendedName>
        <fullName evidence="2">Polymerase acidic protein</fullName>
        <ecNumber evidence="2">3.1.-.-</ecNumber>
    </recommendedName>
    <alternativeName>
        <fullName evidence="2">RNA-directed RNA polymerase subunit P2</fullName>
    </alternativeName>
</protein>
<sequence>MEDFVRQCFNPMIVELAEKAMKEYGEDLKIETNKFAAICTHLEVCFMYSDFHFINEQGESIVVELDDPNALLKHRFEIIEGRDRTMAWTVVNSICNTTGAEKPKFLPDLYDYKENRFIEIGVTRREVHIYYLEKANKIKSENTHIHIFSFTGEEMATKADYTLDEESRARIKTRLFTIRQEMANRGLWDSFRQSERGEETIEEKFEITGTMRRLADQSLPPNFSCLENFRAYVDGFEPNGCIEGKLSQMSKEVNAKIEPFLKTTPRPIKLPDGPPCFQRSKFLLMDALKLSIEDPSHEGEGIPLYDAIKCMRTFFGWKEPYIVKPHEKGINSNYLLSWKQVLAELQDIENEEKIPRTKNMKKTSQLKWALGENMAPEKVDFDNCRDISDLKQYDSDEPELRSLSSWIQNEFNKACELTDSIWIELDEIGEDVAPIEYIASMRRNYFTAEVSHCRATEYIMKGVYINTALLNASCAAMDDFQLIPMISKCRTKEGRRKTNLYGFIIKGRSHLRNDTDVVNFVSMEFSLTDPRLEPHKWEKYCVLEIGDMLLRSAIGQMSRPMFLYVRTNGTSKIKMKWGMEMRRCLLQSLQQIESMIEAESSVKEKDMTKEFFENKSEAWPIGESPKGVEEGSIGKVCRTLLAKSVFNSLYASPQLEGFSAESRKLLLVVQALRDNLEPGTFDLGGLYEAIEECLINDPWVLLNASWFNSFLTHALR</sequence>
<proteinExistence type="inferred from homology"/>
<evidence type="ECO:0000250" key="1">
    <source>
        <dbReference type="UniProtKB" id="P03433"/>
    </source>
</evidence>
<evidence type="ECO:0000255" key="2">
    <source>
        <dbReference type="HAMAP-Rule" id="MF_04063"/>
    </source>
</evidence>
<reference key="1">
    <citation type="submission" date="2005-10" db="EMBL/GenBank/DDBJ databases">
        <title>The NIAID influenza genome sequencing project.</title>
        <authorList>
            <person name="Ghedin E."/>
            <person name="Spiro D."/>
            <person name="Miller N."/>
            <person name="Zaborsky J."/>
            <person name="Feldblyum T."/>
            <person name="Subbu V."/>
            <person name="Shumway M."/>
            <person name="Sparenborg J."/>
            <person name="Groveman L."/>
            <person name="Halpin R."/>
            <person name="Sitz J."/>
            <person name="Koo H."/>
            <person name="Salzberg S.L."/>
            <person name="Webster R.G."/>
            <person name="Hoffmann E."/>
            <person name="Krauss S."/>
            <person name="Naeve C."/>
            <person name="Bao Y."/>
            <person name="Bolotov P."/>
            <person name="Dernovoy D."/>
            <person name="Kiryutin B."/>
            <person name="Lipman D.J."/>
            <person name="Tatusova T."/>
        </authorList>
    </citation>
    <scope>NUCLEOTIDE SEQUENCE [GENOMIC RNA]</scope>
</reference>
<comment type="function">
    <text evidence="2">Plays an essential role in viral RNA transcription and replication by forming the heterotrimeric polymerase complex together with PB1 and PB2 subunits. The complex transcribes viral mRNAs by using a unique mechanism called cap-snatching. It consists in the hijacking and cleavage of host capped pre-mRNAs. These short capped RNAs are then used as primers for viral mRNAs. The PB2 subunit is responsible for the binding of the 5' cap of cellular pre-mRNAs which are subsequently cleaved after 10-13 nucleotides by the PA subunit that carries the endonuclease activity.</text>
</comment>
<comment type="cofactor">
    <cofactor evidence="2">
        <name>Mn(2+)</name>
        <dbReference type="ChEBI" id="CHEBI:29035"/>
    </cofactor>
    <text evidence="2">Binds 2 manganese ions per subunit.</text>
</comment>
<comment type="subunit">
    <text evidence="1 2">Influenza RNA polymerase is composed of three subunits: PB1, PB2 and PA. Interacts (via C-terminus) with PB1 (via N-terminus).</text>
</comment>
<comment type="subcellular location">
    <subcellularLocation>
        <location evidence="2">Host cytoplasm</location>
    </subcellularLocation>
    <subcellularLocation>
        <location evidence="2">Host nucleus</location>
    </subcellularLocation>
    <text evidence="1 2">PB1 and PA are transported in the host nucleus as a complex.</text>
</comment>
<comment type="alternative products">
    <event type="ribosomal frameshifting"/>
    <isoform>
        <id>Q38SQ1-1</id>
        <name>PA</name>
        <sequence type="displayed"/>
    </isoform>
    <isoform>
        <id>P0DJR9-1</id>
        <name>PA-X</name>
        <sequence type="external"/>
    </isoform>
</comment>
<comment type="PTM">
    <text evidence="1 2">Phosphorylated on serines and threonines by host kinases, including human casein kinase II.</text>
</comment>
<comment type="similarity">
    <text evidence="2">Belongs to the influenza viruses PA family.</text>
</comment>
<name>PA_I83A8</name>
<accession>Q38SQ1</accession>
<organism>
    <name type="scientific">Influenza A virus (strain A/Hong Kong/5/1983 H3N2)</name>
    <dbReference type="NCBI Taxonomy" id="387159"/>
    <lineage>
        <taxon>Viruses</taxon>
        <taxon>Riboviria</taxon>
        <taxon>Orthornavirae</taxon>
        <taxon>Negarnaviricota</taxon>
        <taxon>Polyploviricotina</taxon>
        <taxon>Insthoviricetes</taxon>
        <taxon>Articulavirales</taxon>
        <taxon>Orthomyxoviridae</taxon>
        <taxon>Alphainfluenzavirus</taxon>
        <taxon>Alphainfluenzavirus influenzae</taxon>
        <taxon>Influenza A virus</taxon>
    </lineage>
</organism>
<feature type="chain" id="PRO_0000279250" description="Polymerase acidic protein">
    <location>
        <begin position="1"/>
        <end position="716"/>
    </location>
</feature>
<feature type="short sequence motif" description="Nuclear localization signal 1 (NLS1)" evidence="1 2">
    <location>
        <begin position="124"/>
        <end position="139"/>
    </location>
</feature>
<feature type="short sequence motif" description="Nuclear localization signal 2 (NLS2)" evidence="1 2">
    <location>
        <begin position="184"/>
        <end position="247"/>
    </location>
</feature>
<feature type="binding site" evidence="2">
    <location>
        <position position="41"/>
    </location>
    <ligand>
        <name>Mn(2+)</name>
        <dbReference type="ChEBI" id="CHEBI:29035"/>
        <label>1</label>
    </ligand>
</feature>
<feature type="binding site" evidence="2">
    <location>
        <position position="80"/>
    </location>
    <ligand>
        <name>Mn(2+)</name>
        <dbReference type="ChEBI" id="CHEBI:29035"/>
        <label>2</label>
    </ligand>
</feature>
<feature type="binding site" evidence="2">
    <location>
        <position position="108"/>
    </location>
    <ligand>
        <name>Mn(2+)</name>
        <dbReference type="ChEBI" id="CHEBI:29035"/>
        <label>1</label>
    </ligand>
</feature>
<feature type="binding site" evidence="2">
    <location>
        <position position="108"/>
    </location>
    <ligand>
        <name>Mn(2+)</name>
        <dbReference type="ChEBI" id="CHEBI:29035"/>
        <label>2</label>
    </ligand>
</feature>
<feature type="binding site" evidence="2">
    <location>
        <position position="119"/>
    </location>
    <ligand>
        <name>Mn(2+)</name>
        <dbReference type="ChEBI" id="CHEBI:29035"/>
        <label>1</label>
    </ligand>
</feature>
<feature type="binding site" evidence="2">
    <location>
        <position position="120"/>
    </location>
    <ligand>
        <name>Mn(2+)</name>
        <dbReference type="ChEBI" id="CHEBI:29035"/>
        <label>1</label>
    </ligand>
</feature>
<dbReference type="EC" id="3.1.-.-" evidence="2"/>
<dbReference type="EMBL" id="CY003741">
    <property type="protein sequence ID" value="ABB04946.1"/>
    <property type="molecule type" value="Genomic_RNA"/>
</dbReference>
<dbReference type="SMR" id="Q38SQ1"/>
<dbReference type="MEROPS" id="S62.001"/>
<dbReference type="Proteomes" id="UP000167548">
    <property type="component" value="Genome"/>
</dbReference>
<dbReference type="GO" id="GO:0030430">
    <property type="term" value="C:host cell cytoplasm"/>
    <property type="evidence" value="ECO:0007669"/>
    <property type="project" value="UniProtKB-SubCell"/>
</dbReference>
<dbReference type="GO" id="GO:0042025">
    <property type="term" value="C:host cell nucleus"/>
    <property type="evidence" value="ECO:0007669"/>
    <property type="project" value="UniProtKB-SubCell"/>
</dbReference>
<dbReference type="GO" id="GO:0004519">
    <property type="term" value="F:endonuclease activity"/>
    <property type="evidence" value="ECO:0007669"/>
    <property type="project" value="UniProtKB-KW"/>
</dbReference>
<dbReference type="GO" id="GO:0046872">
    <property type="term" value="F:metal ion binding"/>
    <property type="evidence" value="ECO:0007669"/>
    <property type="project" value="UniProtKB-KW"/>
</dbReference>
<dbReference type="GO" id="GO:0003723">
    <property type="term" value="F:RNA binding"/>
    <property type="evidence" value="ECO:0007669"/>
    <property type="project" value="UniProtKB-UniRule"/>
</dbReference>
<dbReference type="GO" id="GO:0075526">
    <property type="term" value="P:cap snatching"/>
    <property type="evidence" value="ECO:0007669"/>
    <property type="project" value="UniProtKB-UniRule"/>
</dbReference>
<dbReference type="GO" id="GO:0006351">
    <property type="term" value="P:DNA-templated transcription"/>
    <property type="evidence" value="ECO:0007669"/>
    <property type="project" value="UniProtKB-UniRule"/>
</dbReference>
<dbReference type="GO" id="GO:0039657">
    <property type="term" value="P:symbiont-mediated suppression of host gene expression"/>
    <property type="evidence" value="ECO:0007669"/>
    <property type="project" value="UniProtKB-KW"/>
</dbReference>
<dbReference type="GO" id="GO:0039523">
    <property type="term" value="P:symbiont-mediated suppression of host mRNA transcription via inhibition of RNA polymerase II activity"/>
    <property type="evidence" value="ECO:0007669"/>
    <property type="project" value="UniProtKB-UniRule"/>
</dbReference>
<dbReference type="GO" id="GO:0039694">
    <property type="term" value="P:viral RNA genome replication"/>
    <property type="evidence" value="ECO:0007669"/>
    <property type="project" value="InterPro"/>
</dbReference>
<dbReference type="GO" id="GO:0075523">
    <property type="term" value="P:viral translational frameshifting"/>
    <property type="evidence" value="ECO:0007669"/>
    <property type="project" value="UniProtKB-KW"/>
</dbReference>
<dbReference type="FunFam" id="3.40.91.90:FF:000001">
    <property type="entry name" value="Polymerase acidic protein"/>
    <property type="match status" value="1"/>
</dbReference>
<dbReference type="Gene3D" id="3.40.91.90">
    <property type="entry name" value="Influenza RNA-dependent RNA polymerase subunit PA, endonuclease domain"/>
    <property type="match status" value="1"/>
</dbReference>
<dbReference type="HAMAP" id="MF_04063">
    <property type="entry name" value="INFV_PA"/>
    <property type="match status" value="1"/>
</dbReference>
<dbReference type="InterPro" id="IPR037534">
    <property type="entry name" value="INFV_PA"/>
</dbReference>
<dbReference type="InterPro" id="IPR001009">
    <property type="entry name" value="PA/PA-X"/>
</dbReference>
<dbReference type="InterPro" id="IPR038372">
    <property type="entry name" value="PA/PA-X_sf"/>
</dbReference>
<dbReference type="Pfam" id="PF00603">
    <property type="entry name" value="Flu_PA"/>
    <property type="match status" value="1"/>
</dbReference>
<keyword id="KW-1157">Cap snatching</keyword>
<keyword id="KW-0255">Endonuclease</keyword>
<keyword id="KW-1262">Eukaryotic host gene expression shutoff by virus</keyword>
<keyword id="KW-1191">Eukaryotic host transcription shutoff by virus</keyword>
<keyword id="KW-1035">Host cytoplasm</keyword>
<keyword id="KW-1190">Host gene expression shutoff by virus</keyword>
<keyword id="KW-1048">Host nucleus</keyword>
<keyword id="KW-0945">Host-virus interaction</keyword>
<keyword id="KW-0378">Hydrolase</keyword>
<keyword id="KW-1104">Inhibition of host RNA polymerase II by virus</keyword>
<keyword id="KW-0464">Manganese</keyword>
<keyword id="KW-0479">Metal-binding</keyword>
<keyword id="KW-0540">Nuclease</keyword>
<keyword id="KW-0597">Phosphoprotein</keyword>
<keyword id="KW-0688">Ribosomal frameshifting</keyword>